<comment type="function">
    <text evidence="1">Catalyzes the dephosphorylation of undecaprenyl diphosphate (UPP). Confers resistance to bacitracin.</text>
</comment>
<comment type="catalytic activity">
    <reaction evidence="1">
        <text>di-trans,octa-cis-undecaprenyl diphosphate + H2O = di-trans,octa-cis-undecaprenyl phosphate + phosphate + H(+)</text>
        <dbReference type="Rhea" id="RHEA:28094"/>
        <dbReference type="ChEBI" id="CHEBI:15377"/>
        <dbReference type="ChEBI" id="CHEBI:15378"/>
        <dbReference type="ChEBI" id="CHEBI:43474"/>
        <dbReference type="ChEBI" id="CHEBI:58405"/>
        <dbReference type="ChEBI" id="CHEBI:60392"/>
        <dbReference type="EC" id="3.6.1.27"/>
    </reaction>
</comment>
<comment type="subcellular location">
    <subcellularLocation>
        <location evidence="1">Cell membrane</location>
        <topology evidence="1">Multi-pass membrane protein</topology>
    </subcellularLocation>
</comment>
<comment type="miscellaneous">
    <text>Bacitracin is thought to be involved in the inhibition of peptidoglycan synthesis by sequestering undecaprenyl diphosphate, thereby reducing the pool of lipid carrier available.</text>
</comment>
<comment type="similarity">
    <text evidence="1">Belongs to the UppP family.</text>
</comment>
<protein>
    <recommendedName>
        <fullName evidence="1">Undecaprenyl-diphosphatase 2</fullName>
        <ecNumber evidence="1">3.6.1.27</ecNumber>
    </recommendedName>
    <alternativeName>
        <fullName evidence="1">Bacitracin resistance protein 2</fullName>
    </alternativeName>
    <alternativeName>
        <fullName evidence="1">Undecaprenyl pyrophosphate phosphatase 2</fullName>
    </alternativeName>
</protein>
<dbReference type="EC" id="3.6.1.27" evidence="1"/>
<dbReference type="EMBL" id="CP000001">
    <property type="protein sequence ID" value="AAU19648.1"/>
    <property type="molecule type" value="Genomic_DNA"/>
</dbReference>
<dbReference type="RefSeq" id="WP_000434782.1">
    <property type="nucleotide sequence ID" value="NZ_CP009968.1"/>
</dbReference>
<dbReference type="SMR" id="Q63FW2"/>
<dbReference type="KEGG" id="bcz:BCE33L0594"/>
<dbReference type="PATRIC" id="fig|288681.22.peg.4998"/>
<dbReference type="Proteomes" id="UP000002612">
    <property type="component" value="Chromosome"/>
</dbReference>
<dbReference type="GO" id="GO:0005886">
    <property type="term" value="C:plasma membrane"/>
    <property type="evidence" value="ECO:0007669"/>
    <property type="project" value="UniProtKB-SubCell"/>
</dbReference>
<dbReference type="GO" id="GO:0050380">
    <property type="term" value="F:undecaprenyl-diphosphatase activity"/>
    <property type="evidence" value="ECO:0007669"/>
    <property type="project" value="UniProtKB-UniRule"/>
</dbReference>
<dbReference type="GO" id="GO:0071555">
    <property type="term" value="P:cell wall organization"/>
    <property type="evidence" value="ECO:0007669"/>
    <property type="project" value="UniProtKB-KW"/>
</dbReference>
<dbReference type="GO" id="GO:0009252">
    <property type="term" value="P:peptidoglycan biosynthetic process"/>
    <property type="evidence" value="ECO:0007669"/>
    <property type="project" value="UniProtKB-KW"/>
</dbReference>
<dbReference type="GO" id="GO:0008360">
    <property type="term" value="P:regulation of cell shape"/>
    <property type="evidence" value="ECO:0007669"/>
    <property type="project" value="UniProtKB-KW"/>
</dbReference>
<dbReference type="GO" id="GO:0046677">
    <property type="term" value="P:response to antibiotic"/>
    <property type="evidence" value="ECO:0007669"/>
    <property type="project" value="UniProtKB-UniRule"/>
</dbReference>
<dbReference type="HAMAP" id="MF_01006">
    <property type="entry name" value="Undec_diphosphatase"/>
    <property type="match status" value="1"/>
</dbReference>
<dbReference type="InterPro" id="IPR003824">
    <property type="entry name" value="UppP"/>
</dbReference>
<dbReference type="PANTHER" id="PTHR30622">
    <property type="entry name" value="UNDECAPRENYL-DIPHOSPHATASE"/>
    <property type="match status" value="1"/>
</dbReference>
<dbReference type="PANTHER" id="PTHR30622:SF2">
    <property type="entry name" value="UNDECAPRENYL-DIPHOSPHATASE"/>
    <property type="match status" value="1"/>
</dbReference>
<dbReference type="Pfam" id="PF02673">
    <property type="entry name" value="BacA"/>
    <property type="match status" value="1"/>
</dbReference>
<gene>
    <name evidence="1" type="primary">uppP2</name>
    <name type="synonym">bacA2</name>
    <name type="ordered locus">BCE33L0594</name>
</gene>
<accession>Q63FW2</accession>
<keyword id="KW-0046">Antibiotic resistance</keyword>
<keyword id="KW-1003">Cell membrane</keyword>
<keyword id="KW-0133">Cell shape</keyword>
<keyword id="KW-0961">Cell wall biogenesis/degradation</keyword>
<keyword id="KW-0378">Hydrolase</keyword>
<keyword id="KW-0472">Membrane</keyword>
<keyword id="KW-0573">Peptidoglycan synthesis</keyword>
<keyword id="KW-0812">Transmembrane</keyword>
<keyword id="KW-1133">Transmembrane helix</keyword>
<sequence>MEQFYYILKYLILGLFQGLTEPIPISSSGHLVLAQHLLGLKIEGFSFELLVNSASLLAVLLIYRNDLIRLTKNGLSYIFTRAEDAKSDFFFIIYLVIATIPAGVIGVLFKDYIDQYLKGVKMVGISLLITAVGLWIIRNLRGRKNDGDLSMKDAIIVGLAQACALIPGISRSGATIVAAMLLGMKQETALRFSFLLYIPVSLGGLLLSITDIAKDPNLDTLFVPYIVAFIATFIMTYISLKWFMNIMAKGNLKYFSFYCIIVGVLTLIFL</sequence>
<reference key="1">
    <citation type="journal article" date="2006" name="J. Bacteriol.">
        <title>Pathogenomic sequence analysis of Bacillus cereus and Bacillus thuringiensis isolates closely related to Bacillus anthracis.</title>
        <authorList>
            <person name="Han C.S."/>
            <person name="Xie G."/>
            <person name="Challacombe J.F."/>
            <person name="Altherr M.R."/>
            <person name="Bhotika S.S."/>
            <person name="Bruce D."/>
            <person name="Campbell C.S."/>
            <person name="Campbell M.L."/>
            <person name="Chen J."/>
            <person name="Chertkov O."/>
            <person name="Cleland C."/>
            <person name="Dimitrijevic M."/>
            <person name="Doggett N.A."/>
            <person name="Fawcett J.J."/>
            <person name="Glavina T."/>
            <person name="Goodwin L.A."/>
            <person name="Hill K.K."/>
            <person name="Hitchcock P."/>
            <person name="Jackson P.J."/>
            <person name="Keim P."/>
            <person name="Kewalramani A.R."/>
            <person name="Longmire J."/>
            <person name="Lucas S."/>
            <person name="Malfatti S."/>
            <person name="McMurry K."/>
            <person name="Meincke L.J."/>
            <person name="Misra M."/>
            <person name="Moseman B.L."/>
            <person name="Mundt M."/>
            <person name="Munk A.C."/>
            <person name="Okinaka R.T."/>
            <person name="Parson-Quintana B."/>
            <person name="Reilly L.P."/>
            <person name="Richardson P."/>
            <person name="Robinson D.L."/>
            <person name="Rubin E."/>
            <person name="Saunders E."/>
            <person name="Tapia R."/>
            <person name="Tesmer J.G."/>
            <person name="Thayer N."/>
            <person name="Thompson L.S."/>
            <person name="Tice H."/>
            <person name="Ticknor L.O."/>
            <person name="Wills P.L."/>
            <person name="Brettin T.S."/>
            <person name="Gilna P."/>
        </authorList>
    </citation>
    <scope>NUCLEOTIDE SEQUENCE [LARGE SCALE GENOMIC DNA]</scope>
    <source>
        <strain>ZK / E33L</strain>
    </source>
</reference>
<name>UPPP2_BACCZ</name>
<feature type="chain" id="PRO_0000151095" description="Undecaprenyl-diphosphatase 2">
    <location>
        <begin position="1"/>
        <end position="270"/>
    </location>
</feature>
<feature type="transmembrane region" description="Helical" evidence="1">
    <location>
        <begin position="5"/>
        <end position="25"/>
    </location>
</feature>
<feature type="transmembrane region" description="Helical" evidence="1">
    <location>
        <begin position="42"/>
        <end position="62"/>
    </location>
</feature>
<feature type="transmembrane region" description="Helical" evidence="1">
    <location>
        <begin position="89"/>
        <end position="109"/>
    </location>
</feature>
<feature type="transmembrane region" description="Helical" evidence="1">
    <location>
        <begin position="117"/>
        <end position="137"/>
    </location>
</feature>
<feature type="transmembrane region" description="Helical" evidence="1">
    <location>
        <begin position="192"/>
        <end position="212"/>
    </location>
</feature>
<feature type="transmembrane region" description="Helical" evidence="1">
    <location>
        <begin position="220"/>
        <end position="240"/>
    </location>
</feature>
<feature type="transmembrane region" description="Helical" evidence="1">
    <location>
        <begin position="250"/>
        <end position="270"/>
    </location>
</feature>
<evidence type="ECO:0000255" key="1">
    <source>
        <dbReference type="HAMAP-Rule" id="MF_01006"/>
    </source>
</evidence>
<proteinExistence type="inferred from homology"/>
<organism>
    <name type="scientific">Bacillus cereus (strain ZK / E33L)</name>
    <dbReference type="NCBI Taxonomy" id="288681"/>
    <lineage>
        <taxon>Bacteria</taxon>
        <taxon>Bacillati</taxon>
        <taxon>Bacillota</taxon>
        <taxon>Bacilli</taxon>
        <taxon>Bacillales</taxon>
        <taxon>Bacillaceae</taxon>
        <taxon>Bacillus</taxon>
        <taxon>Bacillus cereus group</taxon>
    </lineage>
</organism>